<name>PEX6_RAT</name>
<evidence type="ECO:0000250" key="1">
    <source>
        <dbReference type="UniProtKB" id="Q13608"/>
    </source>
</evidence>
<evidence type="ECO:0000255" key="2"/>
<evidence type="ECO:0000269" key="3">
    <source>
    </source>
</evidence>
<evidence type="ECO:0000303" key="4">
    <source>
    </source>
</evidence>
<evidence type="ECO:0000305" key="5"/>
<evidence type="ECO:0000312" key="6">
    <source>
        <dbReference type="RGD" id="621637"/>
    </source>
</evidence>
<accession>P54777</accession>
<accession>O55097</accession>
<proteinExistence type="evidence at protein level"/>
<keyword id="KW-0067">ATP-binding</keyword>
<keyword id="KW-0966">Cell projection</keyword>
<keyword id="KW-0963">Cytoplasm</keyword>
<keyword id="KW-0378">Hydrolase</keyword>
<keyword id="KW-0472">Membrane</keyword>
<keyword id="KW-0488">Methylation</keyword>
<keyword id="KW-0547">Nucleotide-binding</keyword>
<keyword id="KW-0576">Peroxisome</keyword>
<keyword id="KW-0962">Peroxisome biogenesis</keyword>
<keyword id="KW-1185">Reference proteome</keyword>
<keyword id="KW-0677">Repeat</keyword>
<dbReference type="EC" id="3.6.4.-" evidence="1"/>
<dbReference type="EMBL" id="D63673">
    <property type="protein sequence ID" value="BAA09824.1"/>
    <property type="molecule type" value="mRNA"/>
</dbReference>
<dbReference type="EMBL" id="D89660">
    <property type="protein sequence ID" value="BAA24931.1"/>
    <property type="molecule type" value="Genomic_DNA"/>
</dbReference>
<dbReference type="RefSeq" id="NP_476466.1">
    <property type="nucleotide sequence ID" value="NM_057125.1"/>
</dbReference>
<dbReference type="SMR" id="P54777"/>
<dbReference type="BioGRID" id="250712">
    <property type="interactions" value="2"/>
</dbReference>
<dbReference type="FunCoup" id="P54777">
    <property type="interactions" value="1380"/>
</dbReference>
<dbReference type="STRING" id="10116.ENSRNOP00000022582"/>
<dbReference type="PhosphoSitePlus" id="P54777"/>
<dbReference type="jPOST" id="P54777"/>
<dbReference type="PaxDb" id="10116-ENSRNOP00000022582"/>
<dbReference type="ABCD" id="P54777">
    <property type="antibodies" value="1 sequenced antibody"/>
</dbReference>
<dbReference type="Ensembl" id="ENSRNOT00000022582.7">
    <property type="protein sequence ID" value="ENSRNOP00000022582.5"/>
    <property type="gene ID" value="ENSRNOG00000016655.7"/>
</dbReference>
<dbReference type="GeneID" id="117265"/>
<dbReference type="KEGG" id="rno:117265"/>
<dbReference type="UCSC" id="RGD:621637">
    <property type="organism name" value="rat"/>
</dbReference>
<dbReference type="AGR" id="RGD:621637"/>
<dbReference type="CTD" id="5190"/>
<dbReference type="RGD" id="621637">
    <property type="gene designation" value="Pex6"/>
</dbReference>
<dbReference type="eggNOG" id="KOG0736">
    <property type="taxonomic scope" value="Eukaryota"/>
</dbReference>
<dbReference type="GeneTree" id="ENSGT00550000074953"/>
<dbReference type="HOGENOM" id="CLU_000688_0_8_1"/>
<dbReference type="InParanoid" id="P54777"/>
<dbReference type="OMA" id="QCKFAAC"/>
<dbReference type="OrthoDB" id="79875at9989"/>
<dbReference type="PhylomeDB" id="P54777"/>
<dbReference type="Reactome" id="R-RNO-9033241">
    <property type="pathway name" value="Peroxisomal protein import"/>
</dbReference>
<dbReference type="PRO" id="PR:P54777"/>
<dbReference type="Proteomes" id="UP000002494">
    <property type="component" value="Chromosome 9"/>
</dbReference>
<dbReference type="Bgee" id="ENSRNOG00000016655">
    <property type="expression patterns" value="Expressed in liver and 19 other cell types or tissues"/>
</dbReference>
<dbReference type="GO" id="GO:0005737">
    <property type="term" value="C:cytoplasm"/>
    <property type="evidence" value="ECO:0000266"/>
    <property type="project" value="RGD"/>
</dbReference>
<dbReference type="GO" id="GO:0005829">
    <property type="term" value="C:cytosol"/>
    <property type="evidence" value="ECO:0000266"/>
    <property type="project" value="RGD"/>
</dbReference>
<dbReference type="GO" id="GO:0005778">
    <property type="term" value="C:peroxisomal membrane"/>
    <property type="evidence" value="ECO:0000314"/>
    <property type="project" value="HGNC-UCL"/>
</dbReference>
<dbReference type="GO" id="GO:0005777">
    <property type="term" value="C:peroxisome"/>
    <property type="evidence" value="ECO:0000266"/>
    <property type="project" value="RGD"/>
</dbReference>
<dbReference type="GO" id="GO:0097733">
    <property type="term" value="C:photoreceptor cell cilium"/>
    <property type="evidence" value="ECO:0000250"/>
    <property type="project" value="UniProtKB"/>
</dbReference>
<dbReference type="GO" id="GO:0001750">
    <property type="term" value="C:photoreceptor outer segment"/>
    <property type="evidence" value="ECO:0007669"/>
    <property type="project" value="UniProtKB-SubCell"/>
</dbReference>
<dbReference type="GO" id="GO:0005524">
    <property type="term" value="F:ATP binding"/>
    <property type="evidence" value="ECO:0000266"/>
    <property type="project" value="RGD"/>
</dbReference>
<dbReference type="GO" id="GO:0016887">
    <property type="term" value="F:ATP hydrolysis activity"/>
    <property type="evidence" value="ECO:0000266"/>
    <property type="project" value="RGD"/>
</dbReference>
<dbReference type="GO" id="GO:0140318">
    <property type="term" value="F:protein transporter activity"/>
    <property type="evidence" value="ECO:0000250"/>
    <property type="project" value="UniProtKB"/>
</dbReference>
<dbReference type="GO" id="GO:0044877">
    <property type="term" value="F:protein-containing complex binding"/>
    <property type="evidence" value="ECO:0000266"/>
    <property type="project" value="RGD"/>
</dbReference>
<dbReference type="GO" id="GO:0140036">
    <property type="term" value="F:ubiquitin-modified protein reader activity"/>
    <property type="evidence" value="ECO:0000250"/>
    <property type="project" value="UniProtKB"/>
</dbReference>
<dbReference type="GO" id="GO:0007031">
    <property type="term" value="P:peroxisome organization"/>
    <property type="evidence" value="ECO:0000315"/>
    <property type="project" value="RGD"/>
</dbReference>
<dbReference type="GO" id="GO:0016558">
    <property type="term" value="P:protein import into peroxisome matrix"/>
    <property type="evidence" value="ECO:0000318"/>
    <property type="project" value="GO_Central"/>
</dbReference>
<dbReference type="GO" id="GO:0016562">
    <property type="term" value="P:protein import into peroxisome matrix, receptor recycling"/>
    <property type="evidence" value="ECO:0000250"/>
    <property type="project" value="UniProtKB"/>
</dbReference>
<dbReference type="GO" id="GO:0016561">
    <property type="term" value="P:protein import into peroxisome matrix, translocation"/>
    <property type="evidence" value="ECO:0000266"/>
    <property type="project" value="RGD"/>
</dbReference>
<dbReference type="GO" id="GO:0050821">
    <property type="term" value="P:protein stabilization"/>
    <property type="evidence" value="ECO:0000266"/>
    <property type="project" value="RGD"/>
</dbReference>
<dbReference type="GO" id="GO:0006625">
    <property type="term" value="P:protein targeting to peroxisome"/>
    <property type="evidence" value="ECO:0000266"/>
    <property type="project" value="RGD"/>
</dbReference>
<dbReference type="GO" id="GO:0043335">
    <property type="term" value="P:protein unfolding"/>
    <property type="evidence" value="ECO:0000250"/>
    <property type="project" value="UniProtKB"/>
</dbReference>
<dbReference type="CDD" id="cd19527">
    <property type="entry name" value="RecA-like_PEX6_r2"/>
    <property type="match status" value="1"/>
</dbReference>
<dbReference type="CDD" id="cd19481">
    <property type="entry name" value="RecA-like_protease"/>
    <property type="match status" value="1"/>
</dbReference>
<dbReference type="FunFam" id="3.40.50.300:FF:000109">
    <property type="entry name" value="Peroxisomal biogenesis factor 6"/>
    <property type="match status" value="1"/>
</dbReference>
<dbReference type="FunFam" id="1.10.8.60:FF:000039">
    <property type="entry name" value="peroxisome biogenesis factor 6"/>
    <property type="match status" value="1"/>
</dbReference>
<dbReference type="FunFam" id="1.10.8.60:FF:000059">
    <property type="entry name" value="peroxisome biogenesis factor 6"/>
    <property type="match status" value="1"/>
</dbReference>
<dbReference type="FunFam" id="3.40.50.300:FF:000988">
    <property type="entry name" value="peroxisome biogenesis factor 6"/>
    <property type="match status" value="1"/>
</dbReference>
<dbReference type="Gene3D" id="1.10.8.60">
    <property type="match status" value="2"/>
</dbReference>
<dbReference type="Gene3D" id="3.40.50.300">
    <property type="entry name" value="P-loop containing nucleotide triphosphate hydrolases"/>
    <property type="match status" value="2"/>
</dbReference>
<dbReference type="InterPro" id="IPR003593">
    <property type="entry name" value="AAA+_ATPase"/>
</dbReference>
<dbReference type="InterPro" id="IPR050168">
    <property type="entry name" value="AAA_ATPase_domain"/>
</dbReference>
<dbReference type="InterPro" id="IPR003959">
    <property type="entry name" value="ATPase_AAA_core"/>
</dbReference>
<dbReference type="InterPro" id="IPR003960">
    <property type="entry name" value="ATPase_AAA_CS"/>
</dbReference>
<dbReference type="InterPro" id="IPR027417">
    <property type="entry name" value="P-loop_NTPase"/>
</dbReference>
<dbReference type="InterPro" id="IPR047533">
    <property type="entry name" value="RecA-like_PEX6_r2"/>
</dbReference>
<dbReference type="PANTHER" id="PTHR23077">
    <property type="entry name" value="AAA-FAMILY ATPASE"/>
    <property type="match status" value="1"/>
</dbReference>
<dbReference type="PANTHER" id="PTHR23077:SF9">
    <property type="entry name" value="PEROXISOMAL ATPASE PEX6"/>
    <property type="match status" value="1"/>
</dbReference>
<dbReference type="Pfam" id="PF00004">
    <property type="entry name" value="AAA"/>
    <property type="match status" value="2"/>
</dbReference>
<dbReference type="Pfam" id="PF25395">
    <property type="entry name" value="DPBB_PEX6"/>
    <property type="match status" value="1"/>
</dbReference>
<dbReference type="Pfam" id="PF25394">
    <property type="entry name" value="PEX6_vert_N"/>
    <property type="match status" value="1"/>
</dbReference>
<dbReference type="SMART" id="SM00382">
    <property type="entry name" value="AAA"/>
    <property type="match status" value="2"/>
</dbReference>
<dbReference type="SUPFAM" id="SSF52540">
    <property type="entry name" value="P-loop containing nucleoside triphosphate hydrolases"/>
    <property type="match status" value="2"/>
</dbReference>
<dbReference type="PROSITE" id="PS00674">
    <property type="entry name" value="AAA"/>
    <property type="match status" value="1"/>
</dbReference>
<reference key="1">
    <citation type="journal article" date="1995" name="Nat. Genet.">
        <title>Peroxisome assembly factor-2, a putative ATPase cloned by functional complementation on a peroxisome-deficient mammalian cell mutant.</title>
        <authorList>
            <person name="Tsukamoto T."/>
            <person name="Miura S."/>
            <person name="Nakai T."/>
            <person name="Yokota S."/>
            <person name="Shimozawa N."/>
            <person name="Suzuki Y."/>
            <person name="Orii T."/>
            <person name="Fujiki Y."/>
            <person name="Sakai F."/>
            <person name="Bogaki A."/>
            <person name="Yasumo H."/>
            <person name="Osumi T."/>
        </authorList>
    </citation>
    <scope>NUCLEOTIDE SEQUENCE [MRNA]</scope>
    <scope>MUTAGENESIS OF LYS-476 AND LYS-748</scope>
    <source>
        <strain>Fischer 344</strain>
        <tissue>Liver</tissue>
    </source>
</reference>
<reference key="2">
    <citation type="submission" date="1998-02" db="EMBL/GenBank/DDBJ databases">
        <authorList>
            <person name="Tsukamoto T."/>
            <person name="Hashiguchi N."/>
        </authorList>
    </citation>
    <scope>NUCLEOTIDE SEQUENCE [GENOMIC DNA]</scope>
    <source>
        <strain>Sprague-Dawley</strain>
    </source>
</reference>
<organism>
    <name type="scientific">Rattus norvegicus</name>
    <name type="common">Rat</name>
    <dbReference type="NCBI Taxonomy" id="10116"/>
    <lineage>
        <taxon>Eukaryota</taxon>
        <taxon>Metazoa</taxon>
        <taxon>Chordata</taxon>
        <taxon>Craniata</taxon>
        <taxon>Vertebrata</taxon>
        <taxon>Euteleostomi</taxon>
        <taxon>Mammalia</taxon>
        <taxon>Eutheria</taxon>
        <taxon>Euarchontoglires</taxon>
        <taxon>Glires</taxon>
        <taxon>Rodentia</taxon>
        <taxon>Myomorpha</taxon>
        <taxon>Muroidea</taxon>
        <taxon>Muridae</taxon>
        <taxon>Murinae</taxon>
        <taxon>Rattus</taxon>
    </lineage>
</organism>
<comment type="function">
    <text evidence="1">Component of the PEX1-PEX6 AAA ATPase complex, a protein dislocase complex that mediates the ATP-dependent extraction of the PEX5 receptor from peroxisomal membranes, an essential step for PEX5 recycling. Specifically recognizes PEX5 monoubiquitinated at 'Cys-11', and pulls it out of the peroxisome lumen through the PEX2-PEX10-PEX12 retrotranslocation channel. Extraction by the PEX1-PEX6 AAA ATPase complex is accompanied by unfolding of the TPR repeats and release of bound cargo from PEX5.</text>
</comment>
<comment type="catalytic activity">
    <reaction evidence="1">
        <text>ATP + H2O = ADP + phosphate + H(+)</text>
        <dbReference type="Rhea" id="RHEA:13065"/>
        <dbReference type="ChEBI" id="CHEBI:15377"/>
        <dbReference type="ChEBI" id="CHEBI:15378"/>
        <dbReference type="ChEBI" id="CHEBI:30616"/>
        <dbReference type="ChEBI" id="CHEBI:43474"/>
        <dbReference type="ChEBI" id="CHEBI:456216"/>
    </reaction>
    <physiologicalReaction direction="left-to-right" evidence="1">
        <dbReference type="Rhea" id="RHEA:13066"/>
    </physiologicalReaction>
</comment>
<comment type="subunit">
    <text evidence="1">Interacts with PEX1; forming the PEX1-PEX6 AAA ATPase complex, which is composed of a heterohexamer formed by a trimer of PEX1-PEX6 dimers. Interacts with PEX26; interaction is direct and promotes recruitment to peroxisomal membranes. Interacts with ZFAND6.</text>
</comment>
<comment type="subcellular location">
    <subcellularLocation>
        <location evidence="1">Cytoplasm</location>
        <location evidence="1">Cytosol</location>
    </subcellularLocation>
    <subcellularLocation>
        <location evidence="1">Peroxisome membrane</location>
    </subcellularLocation>
    <subcellularLocation>
        <location evidence="1">Cell projection</location>
        <location evidence="1">Cilium</location>
        <location evidence="1">Photoreceptor outer segment</location>
    </subcellularLocation>
    <text evidence="1">Associated with peroxisomal membranes; anchored by PEX26 to peroxisome membranes. Localized at the base of the outer segment of photoreceptor cells.</text>
</comment>
<comment type="similarity">
    <text evidence="5">Belongs to the AAA ATPase family.</text>
</comment>
<feature type="chain" id="PRO_0000084609" description="Peroxisomal ATPase PEX6">
    <location>
        <begin position="1"/>
        <end position="978"/>
    </location>
</feature>
<feature type="binding site" evidence="2">
    <location>
        <begin position="470"/>
        <end position="477"/>
    </location>
    <ligand>
        <name>ATP</name>
        <dbReference type="ChEBI" id="CHEBI:30616"/>
    </ligand>
</feature>
<feature type="binding site" evidence="2">
    <location>
        <begin position="742"/>
        <end position="749"/>
    </location>
    <ligand>
        <name>ATP</name>
        <dbReference type="ChEBI" id="CHEBI:30616"/>
    </ligand>
</feature>
<feature type="modified residue" description="Omega-N-methylarginine" evidence="1">
    <location>
        <position position="119"/>
    </location>
</feature>
<feature type="mutagenesis site" description="No loss of function." evidence="3">
    <original>K</original>
    <variation>A</variation>
    <location>
        <position position="476"/>
    </location>
</feature>
<feature type="mutagenesis site" description="Loss of function." evidence="3">
    <original>K</original>
    <variation>A</variation>
    <location>
        <position position="748"/>
    </location>
</feature>
<feature type="sequence conflict" description="In Ref. 2; BAA24931." evidence="5" ref="2">
    <original>D</original>
    <variation>G</variation>
    <location>
        <position position="299"/>
    </location>
</feature>
<feature type="sequence conflict" description="In Ref. 2; BAA24931." evidence="5" ref="2">
    <original>V</original>
    <variation>A</variation>
    <location>
        <position position="333"/>
    </location>
</feature>
<feature type="sequence conflict" description="In Ref. 2; BAA24931." evidence="5" ref="2">
    <original>Q</original>
    <variation>R</variation>
    <location>
        <position position="343"/>
    </location>
</feature>
<feature type="sequence conflict" description="In Ref. 2; BAA24931." evidence="5" ref="2">
    <original>R</original>
    <variation>C</variation>
    <location>
        <position position="546"/>
    </location>
</feature>
<sequence length="978" mass="104426">MALAVLHVLEPFPTETPPLAVLLPPGGPWPVTGVGLVLALRPASESPAGPALLVAAVEGSGAQCEQRGPGPPPLLVSRTLLRVLALSPGARVRARPVRRPPALGWALLGTSPGPGLGPRVGPLLVRRGETLPVPGSRVLETRPALQGLLGPGTRLAVTELQGRTKLDPESRDHNHPPPPPVVSSFAVSHSIRQLRGVLGGTGDALGVSRSCLRSLGLFQGEWVWVARVGELPNTSQPHLAQVQVLEPRWDLSARLGPNSGQPGEPLADGLVFVPATLAFNLGCDPLEVGELRIQRYLEDSTAAEDKGSCSLLPGPPFARELHIEVLPSPHCGVNGKYDHVLYQHFHTPRVVQEGDVLCVSTAGQVEILEGSLERLPRWREVFFKVKKTVGEAPDGPASAFLADTTHTSLYLAGTTLSRVPPLPSGRSPPWDSLSPPGLEALVNELCAVLKPHLQPGGTLLTGTSCVLLQGPPGSGKTTAVTAACSRLGLHLLKVPCSSLCADSSRTVETKLQTTFSRARRCRPVVLLLTALDLLGRDRDGLGEDARVVATLRHLLLDEDPLSRCPPLMVVATTSRVQDLPTDVRTAFPHELEVPVLSESQRLSVLQALTAHLPLGQEVNLSQLARRCAGFVVGDLYALLTHASRAACTRIKAAGLAMSEEDEGELCAAGFPLLAEDFGQALDQLQTAHSQAVGAPKIPSVSWHDVGGLQDVKKEILETIQLPLEHPELLSLGLRRSGLLLHGPPGTGKTLLAKAVATECSLTFLSVKGPELINMYVGQSEENVREVFARARAAAPCIIFFDELDSLAPSRGRSGDSGGVMDRVVSQLLAELDGLHSTQDVFVIGATNRPDLLDPALLRPGRFDKLVFVGASEDRASQLRVLSAITRKFKLEASVSLMNVLDCCPPQLTGADLYSLCSDAMMTALKRRVRDLEEGLEPRSSALLLTMEDLLQAAARLQPSVSEQELLRYKRIQRKFAAC</sequence>
<protein>
    <recommendedName>
        <fullName evidence="5">Peroxisomal ATPase PEX6</fullName>
        <ecNumber evidence="1">3.6.4.-</ecNumber>
    </recommendedName>
    <alternativeName>
        <fullName evidence="5">Peroxin-6</fullName>
    </alternativeName>
    <alternativeName>
        <fullName evidence="5">Peroxisomal biogenesis factor 6</fullName>
    </alternativeName>
    <alternativeName>
        <fullName evidence="4">Peroxisome assembly factor 2</fullName>
        <shortName evidence="4">PAF-2</shortName>
    </alternativeName>
</protein>
<gene>
    <name evidence="6" type="primary">Pex6</name>
</gene>